<comment type="function">
    <text evidence="5">Paired receptors consist of highly related activating and inhibitory receptors and are widely involved in the regulation of the immune system. Receptor for CD99 and PIANP.</text>
</comment>
<comment type="subunit">
    <text evidence="4">Interacts with CD99.</text>
</comment>
<comment type="subcellular location">
    <subcellularLocation>
        <location evidence="7">Membrane</location>
        <topology evidence="7">Single-pass type I membrane protein</topology>
    </subcellularLocation>
</comment>
<comment type="alternative products">
    <event type="alternative splicing"/>
    <isoform>
        <id>Q2YFS3-1</id>
        <name>1</name>
        <sequence type="displayed"/>
    </isoform>
    <isoform>
        <id>Q2YFS3-2</id>
        <name>2</name>
        <sequence type="described" ref="VSP_017505"/>
    </isoform>
</comment>
<comment type="domain">
    <text evidence="1">Contains 2 copies of a cytoplasmic motif that is referred to as the immunoreceptor tyrosine-based inhibitor motif (ITIM). This motif is involved in modulation of cellular responses. The phosphorylated ITIM motif can bind the SH2 domain of several SH2-containing phosphatases. PTPN6 seems to bind predominantly to the first ITIM motif (By similarity).</text>
</comment>
<comment type="PTM">
    <text evidence="1">Phosphorylated on tyrosine residues.</text>
</comment>
<keyword id="KW-0025">Alternative splicing</keyword>
<keyword id="KW-0325">Glycoprotein</keyword>
<keyword id="KW-0472">Membrane</keyword>
<keyword id="KW-0597">Phosphoprotein</keyword>
<keyword id="KW-0675">Receptor</keyword>
<keyword id="KW-1185">Reference proteome</keyword>
<keyword id="KW-0732">Signal</keyword>
<keyword id="KW-0812">Transmembrane</keyword>
<keyword id="KW-1133">Transmembrane helix</keyword>
<organism>
    <name type="scientific">Mus musculus</name>
    <name type="common">Mouse</name>
    <dbReference type="NCBI Taxonomy" id="10090"/>
    <lineage>
        <taxon>Eukaryota</taxon>
        <taxon>Metazoa</taxon>
        <taxon>Chordata</taxon>
        <taxon>Craniata</taxon>
        <taxon>Vertebrata</taxon>
        <taxon>Euteleostomi</taxon>
        <taxon>Mammalia</taxon>
        <taxon>Eutheria</taxon>
        <taxon>Euarchontoglires</taxon>
        <taxon>Glires</taxon>
        <taxon>Rodentia</taxon>
        <taxon>Myomorpha</taxon>
        <taxon>Muroidea</taxon>
        <taxon>Muridae</taxon>
        <taxon>Murinae</taxon>
        <taxon>Mus</taxon>
        <taxon>Mus</taxon>
    </lineage>
</organism>
<evidence type="ECO:0000250" key="1"/>
<evidence type="ECO:0000255" key="2"/>
<evidence type="ECO:0000256" key="3">
    <source>
        <dbReference type="SAM" id="MobiDB-lite"/>
    </source>
</evidence>
<evidence type="ECO:0000269" key="4">
    <source>
    </source>
</evidence>
<evidence type="ECO:0000269" key="5">
    <source>
    </source>
</evidence>
<evidence type="ECO:0000303" key="6">
    <source>
    </source>
</evidence>
<evidence type="ECO:0000305" key="7"/>
<proteinExistence type="evidence at protein level"/>
<reference key="1">
    <citation type="journal article" date="2000" name="J. Immunol.">
        <title>FDF03, a novel inhibitory receptor of the immunoglobulin superfamily, is expressed by human dendritic and myeloid cells.</title>
        <authorList>
            <person name="Fournier N."/>
            <person name="Chalus L."/>
            <person name="Durand I."/>
            <person name="Garcia E."/>
            <person name="Pin J.J."/>
            <person name="Churakova T."/>
            <person name="Patel S."/>
            <person name="Zlot C."/>
            <person name="Gorman D."/>
            <person name="Zurawski S."/>
            <person name="Abrams J."/>
            <person name="Bates E.E."/>
            <person name="Garrone P."/>
        </authorList>
    </citation>
    <scope>NUCLEOTIDE SEQUENCE [MRNA] (ISOFORM 1)</scope>
</reference>
<reference key="2">
    <citation type="submission" date="2004-11" db="EMBL/GenBank/DDBJ databases">
        <title>Comparative genomic analysis of the paired immunoglobin-like receptor locus at 7q22: duplications, conversions, inversions and the birth of new genes.</title>
        <authorList>
            <person name="Wilson M.D."/>
            <person name="McKinnel L."/>
            <person name="Danby A."/>
            <person name="Schnupf P."/>
            <person name="Hunt P."/>
            <person name="Martindale D."/>
            <person name="Koop B.F."/>
        </authorList>
    </citation>
    <scope>NUCLEOTIDE SEQUENCE [GENOMIC DNA]</scope>
    <source>
        <strain>129/Sv</strain>
    </source>
</reference>
<reference key="3">
    <citation type="journal article" date="2005" name="Science">
        <title>The transcriptional landscape of the mammalian genome.</title>
        <authorList>
            <person name="Carninci P."/>
            <person name="Kasukawa T."/>
            <person name="Katayama S."/>
            <person name="Gough J."/>
            <person name="Frith M.C."/>
            <person name="Maeda N."/>
            <person name="Oyama R."/>
            <person name="Ravasi T."/>
            <person name="Lenhard B."/>
            <person name="Wells C."/>
            <person name="Kodzius R."/>
            <person name="Shimokawa K."/>
            <person name="Bajic V.B."/>
            <person name="Brenner S.E."/>
            <person name="Batalov S."/>
            <person name="Forrest A.R."/>
            <person name="Zavolan M."/>
            <person name="Davis M.J."/>
            <person name="Wilming L.G."/>
            <person name="Aidinis V."/>
            <person name="Allen J.E."/>
            <person name="Ambesi-Impiombato A."/>
            <person name="Apweiler R."/>
            <person name="Aturaliya R.N."/>
            <person name="Bailey T.L."/>
            <person name="Bansal M."/>
            <person name="Baxter L."/>
            <person name="Beisel K.W."/>
            <person name="Bersano T."/>
            <person name="Bono H."/>
            <person name="Chalk A.M."/>
            <person name="Chiu K.P."/>
            <person name="Choudhary V."/>
            <person name="Christoffels A."/>
            <person name="Clutterbuck D.R."/>
            <person name="Crowe M.L."/>
            <person name="Dalla E."/>
            <person name="Dalrymple B.P."/>
            <person name="de Bono B."/>
            <person name="Della Gatta G."/>
            <person name="di Bernardo D."/>
            <person name="Down T."/>
            <person name="Engstrom P."/>
            <person name="Fagiolini M."/>
            <person name="Faulkner G."/>
            <person name="Fletcher C.F."/>
            <person name="Fukushima T."/>
            <person name="Furuno M."/>
            <person name="Futaki S."/>
            <person name="Gariboldi M."/>
            <person name="Georgii-Hemming P."/>
            <person name="Gingeras T.R."/>
            <person name="Gojobori T."/>
            <person name="Green R.E."/>
            <person name="Gustincich S."/>
            <person name="Harbers M."/>
            <person name="Hayashi Y."/>
            <person name="Hensch T.K."/>
            <person name="Hirokawa N."/>
            <person name="Hill D."/>
            <person name="Huminiecki L."/>
            <person name="Iacono M."/>
            <person name="Ikeo K."/>
            <person name="Iwama A."/>
            <person name="Ishikawa T."/>
            <person name="Jakt M."/>
            <person name="Kanapin A."/>
            <person name="Katoh M."/>
            <person name="Kawasawa Y."/>
            <person name="Kelso J."/>
            <person name="Kitamura H."/>
            <person name="Kitano H."/>
            <person name="Kollias G."/>
            <person name="Krishnan S.P."/>
            <person name="Kruger A."/>
            <person name="Kummerfeld S.K."/>
            <person name="Kurochkin I.V."/>
            <person name="Lareau L.F."/>
            <person name="Lazarevic D."/>
            <person name="Lipovich L."/>
            <person name="Liu J."/>
            <person name="Liuni S."/>
            <person name="McWilliam S."/>
            <person name="Madan Babu M."/>
            <person name="Madera M."/>
            <person name="Marchionni L."/>
            <person name="Matsuda H."/>
            <person name="Matsuzawa S."/>
            <person name="Miki H."/>
            <person name="Mignone F."/>
            <person name="Miyake S."/>
            <person name="Morris K."/>
            <person name="Mottagui-Tabar S."/>
            <person name="Mulder N."/>
            <person name="Nakano N."/>
            <person name="Nakauchi H."/>
            <person name="Ng P."/>
            <person name="Nilsson R."/>
            <person name="Nishiguchi S."/>
            <person name="Nishikawa S."/>
            <person name="Nori F."/>
            <person name="Ohara O."/>
            <person name="Okazaki Y."/>
            <person name="Orlando V."/>
            <person name="Pang K.C."/>
            <person name="Pavan W.J."/>
            <person name="Pavesi G."/>
            <person name="Pesole G."/>
            <person name="Petrovsky N."/>
            <person name="Piazza S."/>
            <person name="Reed J."/>
            <person name="Reid J.F."/>
            <person name="Ring B.Z."/>
            <person name="Ringwald M."/>
            <person name="Rost B."/>
            <person name="Ruan Y."/>
            <person name="Salzberg S.L."/>
            <person name="Sandelin A."/>
            <person name="Schneider C."/>
            <person name="Schoenbach C."/>
            <person name="Sekiguchi K."/>
            <person name="Semple C.A."/>
            <person name="Seno S."/>
            <person name="Sessa L."/>
            <person name="Sheng Y."/>
            <person name="Shibata Y."/>
            <person name="Shimada H."/>
            <person name="Shimada K."/>
            <person name="Silva D."/>
            <person name="Sinclair B."/>
            <person name="Sperling S."/>
            <person name="Stupka E."/>
            <person name="Sugiura K."/>
            <person name="Sultana R."/>
            <person name="Takenaka Y."/>
            <person name="Taki K."/>
            <person name="Tammoja K."/>
            <person name="Tan S.L."/>
            <person name="Tang S."/>
            <person name="Taylor M.S."/>
            <person name="Tegner J."/>
            <person name="Teichmann S.A."/>
            <person name="Ueda H.R."/>
            <person name="van Nimwegen E."/>
            <person name="Verardo R."/>
            <person name="Wei C.L."/>
            <person name="Yagi K."/>
            <person name="Yamanishi H."/>
            <person name="Zabarovsky E."/>
            <person name="Zhu S."/>
            <person name="Zimmer A."/>
            <person name="Hide W."/>
            <person name="Bult C."/>
            <person name="Grimmond S.M."/>
            <person name="Teasdale R.D."/>
            <person name="Liu E.T."/>
            <person name="Brusic V."/>
            <person name="Quackenbush J."/>
            <person name="Wahlestedt C."/>
            <person name="Mattick J.S."/>
            <person name="Hume D.A."/>
            <person name="Kai C."/>
            <person name="Sasaki D."/>
            <person name="Tomaru Y."/>
            <person name="Fukuda S."/>
            <person name="Kanamori-Katayama M."/>
            <person name="Suzuki M."/>
            <person name="Aoki J."/>
            <person name="Arakawa T."/>
            <person name="Iida J."/>
            <person name="Imamura K."/>
            <person name="Itoh M."/>
            <person name="Kato T."/>
            <person name="Kawaji H."/>
            <person name="Kawagashira N."/>
            <person name="Kawashima T."/>
            <person name="Kojima M."/>
            <person name="Kondo S."/>
            <person name="Konno H."/>
            <person name="Nakano K."/>
            <person name="Ninomiya N."/>
            <person name="Nishio T."/>
            <person name="Okada M."/>
            <person name="Plessy C."/>
            <person name="Shibata K."/>
            <person name="Shiraki T."/>
            <person name="Suzuki S."/>
            <person name="Tagami M."/>
            <person name="Waki K."/>
            <person name="Watahiki A."/>
            <person name="Okamura-Oho Y."/>
            <person name="Suzuki H."/>
            <person name="Kawai J."/>
            <person name="Hayashizaki Y."/>
        </authorList>
    </citation>
    <scope>NUCLEOTIDE SEQUENCE [LARGE SCALE MRNA] (ISOFORM 2)</scope>
    <source>
        <strain>C57BL/6J</strain>
        <tissue>Thymus</tissue>
    </source>
</reference>
<reference key="4">
    <citation type="journal article" date="2004" name="J. Exp. Med.">
        <title>Activation of natural killer cells and dendritic cells upon recognition of a novel CD99-like ligand by paired immunoglobulin-like type 2 receptor.</title>
        <authorList>
            <person name="Shiratori I."/>
            <person name="Ogasawara K."/>
            <person name="Saito T."/>
            <person name="Lanier L.L."/>
            <person name="Arase H."/>
        </authorList>
    </citation>
    <scope>INTERACTION WITH CD99</scope>
</reference>
<reference key="5">
    <citation type="journal article" date="2011" name="Biochem. Biophys. Res. Commun.">
        <title>PANP is a novel O-glycosylated PILRalpha ligand expressed in neural tissues.</title>
        <authorList>
            <person name="Kogure A."/>
            <person name="Shiratori I."/>
            <person name="Wang J."/>
            <person name="Lanier L.L."/>
            <person name="Arase H."/>
        </authorList>
    </citation>
    <scope>FUNCTION</scope>
</reference>
<accession>Q2YFS3</accession>
<accession>Q8BYA6</accession>
<gene>
    <name type="primary">Pilra</name>
</gene>
<feature type="signal peptide" evidence="2">
    <location>
        <begin position="1"/>
        <end position="31"/>
    </location>
</feature>
<feature type="chain" id="PRO_0000226823" description="Paired immunoglobulin-like type 2 receptor alpha">
    <location>
        <begin position="32"/>
        <end position="302"/>
    </location>
</feature>
<feature type="topological domain" description="Extracellular" evidence="2">
    <location>
        <begin position="32"/>
        <end position="198"/>
    </location>
</feature>
<feature type="transmembrane region" description="Helical" evidence="2">
    <location>
        <begin position="199"/>
        <end position="219"/>
    </location>
</feature>
<feature type="topological domain" description="Cytoplasmic" evidence="2">
    <location>
        <begin position="220"/>
        <end position="302"/>
    </location>
</feature>
<feature type="region of interest" description="Disordered" evidence="3">
    <location>
        <begin position="228"/>
        <end position="293"/>
    </location>
</feature>
<feature type="short sequence motif" description="ITIM motif 1">
    <location>
        <begin position="265"/>
        <end position="270"/>
    </location>
</feature>
<feature type="short sequence motif" description="ITIM motif 2">
    <location>
        <begin position="294"/>
        <end position="299"/>
    </location>
</feature>
<feature type="compositionally biased region" description="Basic and acidic residues" evidence="3">
    <location>
        <begin position="228"/>
        <end position="248"/>
    </location>
</feature>
<feature type="compositionally biased region" description="Polar residues" evidence="3">
    <location>
        <begin position="270"/>
        <end position="280"/>
    </location>
</feature>
<feature type="glycosylation site" description="N-linked (GlcNAc...) asparagine" evidence="2">
    <location>
        <position position="90"/>
    </location>
</feature>
<feature type="glycosylation site" description="N-linked (GlcNAc...) asparagine" evidence="2">
    <location>
        <position position="107"/>
    </location>
</feature>
<feature type="splice variant" id="VSP_017505" description="In isoform 2." evidence="6">
    <original>MALLISLPGGTPAMAQILLLLSSACLHA</original>
    <variation>MFCVVLSMFPVTVPCSGFRVSPSFP</variation>
    <location>
        <begin position="1"/>
        <end position="28"/>
    </location>
</feature>
<protein>
    <recommendedName>
        <fullName>Paired immunoglobulin-like type 2 receptor alpha</fullName>
    </recommendedName>
    <alternativeName>
        <fullName>Cell surface receptor FDF03</fullName>
    </alternativeName>
    <alternativeName>
        <fullName>Inhibitory receptor PILR-alpha</fullName>
    </alternativeName>
</protein>
<sequence>MALLISLPGGTPAMAQILLLLSSACLHAGNSERSNRKNGFGVNQPESCSGVQGGSIDIPFSFYFPWKLAKDPQMSIAWRWKDFHGEFIYNSSLPFIHEHFKGRLILNWTQGQTSGVLRILNLKESDQTRYFGRVFLQTTEGIQFWQSIPGTQLNVTNATCTPTTLPSTTAATSAHTQNDITEVKSANIGGLDLQTTVGLATAAAVFLVGVLGLIVFLWWKRRRQGQKTKAEIPAREPLETSEKHESVGHEGQCMDPKENPKDNNIVYASISLSSPTSPGTAPNLPVHGNPQEETVYSIVKAK</sequence>
<name>PILRA_MOUSE</name>
<dbReference type="EMBL" id="AJ400844">
    <property type="protein sequence ID" value="CAC01617.1"/>
    <property type="molecule type" value="mRNA"/>
</dbReference>
<dbReference type="EMBL" id="AY823670">
    <property type="protein sequence ID" value="AAX39494.1"/>
    <property type="molecule type" value="Genomic_DNA"/>
</dbReference>
<dbReference type="EMBL" id="AK041413">
    <property type="protein sequence ID" value="BAC30935.1"/>
    <property type="molecule type" value="mRNA"/>
</dbReference>
<dbReference type="CCDS" id="CCDS19780.1">
    <molecule id="Q2YFS3-1"/>
</dbReference>
<dbReference type="RefSeq" id="NP_705730.1">
    <molecule id="Q2YFS3-1"/>
    <property type="nucleotide sequence ID" value="NM_153510.3"/>
</dbReference>
<dbReference type="SMR" id="Q2YFS3"/>
<dbReference type="FunCoup" id="Q2YFS3">
    <property type="interactions" value="23"/>
</dbReference>
<dbReference type="IntAct" id="Q2YFS3">
    <property type="interactions" value="1"/>
</dbReference>
<dbReference type="STRING" id="10090.ENSMUSP00000050313"/>
<dbReference type="GlyCosmos" id="Q2YFS3">
    <property type="glycosylation" value="2 sites, No reported glycans"/>
</dbReference>
<dbReference type="GlyGen" id="Q2YFS3">
    <property type="glycosylation" value="3 sites"/>
</dbReference>
<dbReference type="PhosphoSitePlus" id="Q2YFS3"/>
<dbReference type="PaxDb" id="10090-ENSMUSP00000050313"/>
<dbReference type="ProteomicsDB" id="287730">
    <molecule id="Q2YFS3-1"/>
</dbReference>
<dbReference type="ProteomicsDB" id="287731">
    <molecule id="Q2YFS3-2"/>
</dbReference>
<dbReference type="ABCD" id="Q2YFS3">
    <property type="antibodies" value="15 sequenced antibodies"/>
</dbReference>
<dbReference type="DNASU" id="231805"/>
<dbReference type="Ensembl" id="ENSMUST00000058897.11">
    <molecule id="Q2YFS3-1"/>
    <property type="protein sequence ID" value="ENSMUSP00000050313.5"/>
    <property type="gene ID" value="ENSMUSG00000046245.14"/>
</dbReference>
<dbReference type="Ensembl" id="ENSMUST00000110980.2">
    <molecule id="Q2YFS3-2"/>
    <property type="protein sequence ID" value="ENSMUSP00000106608.2"/>
    <property type="gene ID" value="ENSMUSG00000046245.14"/>
</dbReference>
<dbReference type="GeneID" id="231805"/>
<dbReference type="KEGG" id="mmu:231805"/>
<dbReference type="UCSC" id="uc009aea.2">
    <molecule id="Q2YFS3-1"/>
    <property type="organism name" value="mouse"/>
</dbReference>
<dbReference type="UCSC" id="uc009aeb.2">
    <molecule id="Q2YFS3-2"/>
    <property type="organism name" value="mouse"/>
</dbReference>
<dbReference type="AGR" id="MGI:2450529"/>
<dbReference type="CTD" id="29992"/>
<dbReference type="MGI" id="MGI:2450529">
    <property type="gene designation" value="Pilra"/>
</dbReference>
<dbReference type="VEuPathDB" id="HostDB:ENSMUSG00000046245"/>
<dbReference type="eggNOG" id="ENOG502SUHR">
    <property type="taxonomic scope" value="Eukaryota"/>
</dbReference>
<dbReference type="GeneTree" id="ENSGT00390000008831"/>
<dbReference type="HOGENOM" id="CLU_070832_0_0_1"/>
<dbReference type="InParanoid" id="Q2YFS3"/>
<dbReference type="OMA" id="KQMWQSI"/>
<dbReference type="OrthoDB" id="6152887at2759"/>
<dbReference type="PhylomeDB" id="Q2YFS3"/>
<dbReference type="TreeFam" id="TF338478"/>
<dbReference type="Reactome" id="R-MMU-198933">
    <property type="pathway name" value="Immunoregulatory interactions between a Lymphoid and a non-Lymphoid cell"/>
</dbReference>
<dbReference type="BioGRID-ORCS" id="231805">
    <property type="hits" value="1 hit in 78 CRISPR screens"/>
</dbReference>
<dbReference type="PRO" id="PR:Q2YFS3"/>
<dbReference type="Proteomes" id="UP000000589">
    <property type="component" value="Chromosome 5"/>
</dbReference>
<dbReference type="RNAct" id="Q2YFS3">
    <property type="molecule type" value="protein"/>
</dbReference>
<dbReference type="Bgee" id="ENSMUSG00000046245">
    <property type="expression patterns" value="Expressed in granulocyte and 103 other cell types or tissues"/>
</dbReference>
<dbReference type="ExpressionAtlas" id="Q2YFS3">
    <property type="expression patterns" value="baseline and differential"/>
</dbReference>
<dbReference type="GO" id="GO:0071944">
    <property type="term" value="C:cell periphery"/>
    <property type="evidence" value="ECO:0007669"/>
    <property type="project" value="UniProtKB-ARBA"/>
</dbReference>
<dbReference type="GO" id="GO:0016020">
    <property type="term" value="C:membrane"/>
    <property type="evidence" value="ECO:0007669"/>
    <property type="project" value="UniProtKB-SubCell"/>
</dbReference>
<dbReference type="GO" id="GO:0007165">
    <property type="term" value="P:signal transduction"/>
    <property type="evidence" value="ECO:0000266"/>
    <property type="project" value="MGI"/>
</dbReference>
<dbReference type="FunFam" id="2.60.40.10:FF:000753">
    <property type="entry name" value="Paired immunoglobulin-like type 2 receptor alpha"/>
    <property type="match status" value="1"/>
</dbReference>
<dbReference type="Gene3D" id="2.60.40.10">
    <property type="entry name" value="Immunoglobulins"/>
    <property type="match status" value="1"/>
</dbReference>
<dbReference type="InterPro" id="IPR036179">
    <property type="entry name" value="Ig-like_dom_sf"/>
</dbReference>
<dbReference type="InterPro" id="IPR013783">
    <property type="entry name" value="Ig-like_fold"/>
</dbReference>
<dbReference type="InterPro" id="IPR051694">
    <property type="entry name" value="Immunoregulatory_rcpt-like"/>
</dbReference>
<dbReference type="PANTHER" id="PTHR15549">
    <property type="entry name" value="PAIRED IMMUNOGLOBULIN-LIKE TYPE 2 RECEPTOR"/>
    <property type="match status" value="1"/>
</dbReference>
<dbReference type="PANTHER" id="PTHR15549:SF14">
    <property type="entry name" value="PAIRED IMMUNOGLOBULIN-LIKE TYPE 2 RECEPTOR ALPHA"/>
    <property type="match status" value="1"/>
</dbReference>
<dbReference type="SUPFAM" id="SSF48726">
    <property type="entry name" value="Immunoglobulin"/>
    <property type="match status" value="1"/>
</dbReference>